<proteinExistence type="evidence at protein level"/>
<reference key="1">
    <citation type="journal article" date="2000" name="Nature">
        <title>Complete genome sequence of Pseudomonas aeruginosa PAO1, an opportunistic pathogen.</title>
        <authorList>
            <person name="Stover C.K."/>
            <person name="Pham X.-Q.T."/>
            <person name="Erwin A.L."/>
            <person name="Mizoguchi S.D."/>
            <person name="Warrener P."/>
            <person name="Hickey M.J."/>
            <person name="Brinkman F.S.L."/>
            <person name="Hufnagle W.O."/>
            <person name="Kowalik D.J."/>
            <person name="Lagrou M."/>
            <person name="Garber R.L."/>
            <person name="Goltry L."/>
            <person name="Tolentino E."/>
            <person name="Westbrock-Wadman S."/>
            <person name="Yuan Y."/>
            <person name="Brody L.L."/>
            <person name="Coulter S.N."/>
            <person name="Folger K.R."/>
            <person name="Kas A."/>
            <person name="Larbig K."/>
            <person name="Lim R.M."/>
            <person name="Smith K.A."/>
            <person name="Spencer D.H."/>
            <person name="Wong G.K.-S."/>
            <person name="Wu Z."/>
            <person name="Paulsen I.T."/>
            <person name="Reizer J."/>
            <person name="Saier M.H. Jr."/>
            <person name="Hancock R.E.W."/>
            <person name="Lory S."/>
            <person name="Olson M.V."/>
        </authorList>
    </citation>
    <scope>NUCLEOTIDE SEQUENCE [LARGE SCALE GENOMIC DNA]</scope>
    <source>
        <strain>ATCC 15692 / DSM 22644 / CIP 104116 / JCM 14847 / LMG 12228 / 1C / PRS 101 / PAO1</strain>
    </source>
</reference>
<organism>
    <name type="scientific">Pseudomonas aeruginosa (strain ATCC 15692 / DSM 22644 / CIP 104116 / JCM 14847 / LMG 12228 / 1C / PRS 101 / PAO1)</name>
    <dbReference type="NCBI Taxonomy" id="208964"/>
    <lineage>
        <taxon>Bacteria</taxon>
        <taxon>Pseudomonadati</taxon>
        <taxon>Pseudomonadota</taxon>
        <taxon>Gammaproteobacteria</taxon>
        <taxon>Pseudomonadales</taxon>
        <taxon>Pseudomonadaceae</taxon>
        <taxon>Pseudomonas</taxon>
    </lineage>
</organism>
<keyword id="KW-0002">3D-structure</keyword>
<keyword id="KW-1185">Reference proteome</keyword>
<keyword id="KW-0687">Ribonucleoprotein</keyword>
<keyword id="KW-0689">Ribosomal protein</keyword>
<keyword id="KW-0694">RNA-binding</keyword>
<keyword id="KW-0699">rRNA-binding</keyword>
<comment type="function">
    <text evidence="1">One of the primary rRNA binding proteins, it binds specifically to the 5'-end of 16S ribosomal RNA.</text>
</comment>
<comment type="subunit">
    <text evidence="1">Part of the 30S ribosomal subunit.</text>
</comment>
<comment type="similarity">
    <text evidence="1">Belongs to the universal ribosomal protein uS17 family.</text>
</comment>
<accession>Q9HWE4</accession>
<sequence length="88" mass="10086">MAEAQKTVRTLTGRVVSDKMDKTVTVLIERRVKHPIYGKYVKRSTKLHAHDESNQCRIGDLVTIRETRPLAKTKAWTLVDIVERAVEV</sequence>
<dbReference type="EMBL" id="AE004091">
    <property type="protein sequence ID" value="AAG07642.1"/>
    <property type="molecule type" value="Genomic_DNA"/>
</dbReference>
<dbReference type="PIR" id="D83115">
    <property type="entry name" value="D83115"/>
</dbReference>
<dbReference type="RefSeq" id="NP_252944.1">
    <property type="nucleotide sequence ID" value="NC_002516.2"/>
</dbReference>
<dbReference type="RefSeq" id="WP_003093717.1">
    <property type="nucleotide sequence ID" value="NZ_QZGE01000028.1"/>
</dbReference>
<dbReference type="PDB" id="7UNR">
    <property type="method" value="EM"/>
    <property type="resolution" value="2.90 A"/>
    <property type="chains" value="q=1-88"/>
</dbReference>
<dbReference type="PDB" id="7UNU">
    <property type="method" value="EM"/>
    <property type="resolution" value="2.90 A"/>
    <property type="chains" value="q=1-88"/>
</dbReference>
<dbReference type="PDB" id="7UNV">
    <property type="method" value="EM"/>
    <property type="resolution" value="2.70 A"/>
    <property type="chains" value="q=1-88"/>
</dbReference>
<dbReference type="PDB" id="7UNW">
    <property type="method" value="EM"/>
    <property type="resolution" value="2.60 A"/>
    <property type="chains" value="q=1-88"/>
</dbReference>
<dbReference type="PDB" id="8CD1">
    <property type="method" value="EM"/>
    <property type="resolution" value="3.00 A"/>
    <property type="chains" value="q=1-88"/>
</dbReference>
<dbReference type="PDB" id="8RWG">
    <property type="method" value="EM"/>
    <property type="resolution" value="2.46 A"/>
    <property type="chains" value="p=1-88"/>
</dbReference>
<dbReference type="PDBsum" id="7UNR"/>
<dbReference type="PDBsum" id="7UNU"/>
<dbReference type="PDBsum" id="7UNV"/>
<dbReference type="PDBsum" id="7UNW"/>
<dbReference type="PDBsum" id="8CD1"/>
<dbReference type="PDBsum" id="8RWG"/>
<dbReference type="EMDB" id="EMD-16566"/>
<dbReference type="EMDB" id="EMD-19547"/>
<dbReference type="EMDB" id="EMD-26630"/>
<dbReference type="EMDB" id="EMD-26633"/>
<dbReference type="EMDB" id="EMD-26634"/>
<dbReference type="EMDB" id="EMD-26635"/>
<dbReference type="SMR" id="Q9HWE4"/>
<dbReference type="FunCoup" id="Q9HWE4">
    <property type="interactions" value="516"/>
</dbReference>
<dbReference type="STRING" id="208964.PA4254"/>
<dbReference type="PaxDb" id="208964-PA4254"/>
<dbReference type="DNASU" id="881770"/>
<dbReference type="GeneID" id="77219207"/>
<dbReference type="GeneID" id="881770"/>
<dbReference type="KEGG" id="pae:PA4254"/>
<dbReference type="PATRIC" id="fig|208964.12.peg.4455"/>
<dbReference type="PseudoCAP" id="PA4254"/>
<dbReference type="HOGENOM" id="CLU_073626_1_1_6"/>
<dbReference type="InParanoid" id="Q9HWE4"/>
<dbReference type="OrthoDB" id="9811714at2"/>
<dbReference type="PhylomeDB" id="Q9HWE4"/>
<dbReference type="BioCyc" id="PAER208964:G1FZ6-4327-MONOMER"/>
<dbReference type="PRO" id="PR:Q9HWE4"/>
<dbReference type="Proteomes" id="UP000002438">
    <property type="component" value="Chromosome"/>
</dbReference>
<dbReference type="GO" id="GO:0022627">
    <property type="term" value="C:cytosolic small ribosomal subunit"/>
    <property type="evidence" value="ECO:0000318"/>
    <property type="project" value="GO_Central"/>
</dbReference>
<dbReference type="GO" id="GO:0019843">
    <property type="term" value="F:rRNA binding"/>
    <property type="evidence" value="ECO:0007669"/>
    <property type="project" value="UniProtKB-UniRule"/>
</dbReference>
<dbReference type="GO" id="GO:0003735">
    <property type="term" value="F:structural constituent of ribosome"/>
    <property type="evidence" value="ECO:0000318"/>
    <property type="project" value="GO_Central"/>
</dbReference>
<dbReference type="GO" id="GO:0006412">
    <property type="term" value="P:translation"/>
    <property type="evidence" value="ECO:0007669"/>
    <property type="project" value="UniProtKB-UniRule"/>
</dbReference>
<dbReference type="CDD" id="cd00364">
    <property type="entry name" value="Ribosomal_uS17"/>
    <property type="match status" value="1"/>
</dbReference>
<dbReference type="FunFam" id="2.40.50.140:FF:000014">
    <property type="entry name" value="30S ribosomal protein S17"/>
    <property type="match status" value="1"/>
</dbReference>
<dbReference type="Gene3D" id="2.40.50.140">
    <property type="entry name" value="Nucleic acid-binding proteins"/>
    <property type="match status" value="1"/>
</dbReference>
<dbReference type="HAMAP" id="MF_01345_B">
    <property type="entry name" value="Ribosomal_uS17_B"/>
    <property type="match status" value="1"/>
</dbReference>
<dbReference type="InterPro" id="IPR012340">
    <property type="entry name" value="NA-bd_OB-fold"/>
</dbReference>
<dbReference type="InterPro" id="IPR000266">
    <property type="entry name" value="Ribosomal_uS17"/>
</dbReference>
<dbReference type="InterPro" id="IPR019984">
    <property type="entry name" value="Ribosomal_uS17_bact/chlr"/>
</dbReference>
<dbReference type="NCBIfam" id="NF004123">
    <property type="entry name" value="PRK05610.1"/>
    <property type="match status" value="1"/>
</dbReference>
<dbReference type="NCBIfam" id="TIGR03635">
    <property type="entry name" value="uS17_bact"/>
    <property type="match status" value="1"/>
</dbReference>
<dbReference type="PANTHER" id="PTHR10744">
    <property type="entry name" value="40S RIBOSOMAL PROTEIN S11 FAMILY MEMBER"/>
    <property type="match status" value="1"/>
</dbReference>
<dbReference type="PANTHER" id="PTHR10744:SF1">
    <property type="entry name" value="SMALL RIBOSOMAL SUBUNIT PROTEIN US17M"/>
    <property type="match status" value="1"/>
</dbReference>
<dbReference type="Pfam" id="PF00366">
    <property type="entry name" value="Ribosomal_S17"/>
    <property type="match status" value="1"/>
</dbReference>
<dbReference type="PRINTS" id="PR00973">
    <property type="entry name" value="RIBOSOMALS17"/>
</dbReference>
<dbReference type="SUPFAM" id="SSF50249">
    <property type="entry name" value="Nucleic acid-binding proteins"/>
    <property type="match status" value="1"/>
</dbReference>
<feature type="chain" id="PRO_0000233542" description="Small ribosomal subunit protein uS17">
    <location>
        <begin position="1"/>
        <end position="88"/>
    </location>
</feature>
<evidence type="ECO:0000255" key="1">
    <source>
        <dbReference type="HAMAP-Rule" id="MF_01345"/>
    </source>
</evidence>
<evidence type="ECO:0000305" key="2"/>
<protein>
    <recommendedName>
        <fullName evidence="1">Small ribosomal subunit protein uS17</fullName>
    </recommendedName>
    <alternativeName>
        <fullName evidence="2">30S ribosomal protein S17</fullName>
    </alternativeName>
</protein>
<gene>
    <name evidence="1" type="primary">rpsQ</name>
    <name type="ordered locus">PA4254</name>
</gene>
<name>RS17_PSEAE</name>